<evidence type="ECO:0000250" key="1">
    <source>
        <dbReference type="UniProtKB" id="P63146"/>
    </source>
</evidence>
<evidence type="ECO:0000255" key="2">
    <source>
        <dbReference type="PROSITE-ProRule" id="PRU00388"/>
    </source>
</evidence>
<evidence type="ECO:0000255" key="3">
    <source>
        <dbReference type="PROSITE-ProRule" id="PRU10133"/>
    </source>
</evidence>
<evidence type="ECO:0000269" key="4">
    <source>
    </source>
</evidence>
<evidence type="ECO:0000269" key="5">
    <source>
    </source>
</evidence>
<evidence type="ECO:0000269" key="6">
    <source>
    </source>
</evidence>
<evidence type="ECO:0000305" key="7"/>
<evidence type="ECO:0000312" key="8">
    <source>
        <dbReference type="RGD" id="708345"/>
    </source>
</evidence>
<reference key="1">
    <citation type="journal article" date="1992" name="J. Biol. Chem.">
        <title>A rabbit reticulocyte ubiquitin carrier protein that supports ubiquitin-dependent proteolysis (E214k) is homologous to the yeast DNA repair gene RAD6.</title>
        <authorList>
            <person name="Wing S.S."/>
            <person name="Dumas F."/>
            <person name="Banville D."/>
        </authorList>
    </citation>
    <scope>NUCLEOTIDE SEQUENCE [MRNA]</scope>
    <scope>FUNCTION</scope>
</reference>
<reference key="2">
    <citation type="journal article" date="1994" name="Am. J. Physiol.">
        <title>14-kDa ubiquitin-conjugating enzyme: structure of the rat gene and regulation upon fasting and by insulin.</title>
        <authorList>
            <person name="Wing S.S."/>
            <person name="Banville D."/>
        </authorList>
    </citation>
    <scope>NUCLEOTIDE SEQUENCE [GENOMIC DNA / MRNA]</scope>
    <scope>TISSUE SPECIFICITY</scope>
</reference>
<reference key="3">
    <citation type="submission" date="1999-04" db="EMBL/GenBank/DDBJ databases">
        <title>Isolation of a ubiquitin-conjugating enzyme gene induced following cerebral ischemia from the rat brain using modified subtractive hybridization and differential screening.</title>
        <authorList>
            <person name="Chen D."/>
            <person name="Graham S.H."/>
            <person name="Jing K."/>
            <person name="Simon R.P."/>
            <person name="Chen J."/>
        </authorList>
    </citation>
    <scope>NUCLEOTIDE SEQUENCE</scope>
    <source>
        <tissue>Brain</tissue>
    </source>
</reference>
<reference key="4">
    <citation type="journal article" date="2004" name="Genome Res.">
        <title>The status, quality, and expansion of the NIH full-length cDNA project: the Mammalian Gene Collection (MGC).</title>
        <authorList>
            <consortium name="The MGC Project Team"/>
        </authorList>
    </citation>
    <scope>NUCLEOTIDE SEQUENCE [LARGE SCALE MRNA]</scope>
    <source>
        <tissue>Heart</tissue>
    </source>
</reference>
<reference key="5">
    <citation type="journal article" date="2005" name="Mol. Cell. Neurosci.">
        <title>The N-end rule ubiquitin-conjugating enzyme, HR6B, is up-regulated by nerve growth factor and required for neurite outgrowth.</title>
        <authorList>
            <person name="Kavakebi P."/>
            <person name="Hausott B."/>
            <person name="Tomasino A."/>
            <person name="Ingorokva S."/>
            <person name="Klimaschewski L."/>
        </authorList>
    </citation>
    <scope>INDUCTION</scope>
    <scope>SUBCELLULAR LOCATION</scope>
    <scope>FUNCTION</scope>
</reference>
<proteinExistence type="evidence at transcript level"/>
<accession>P63149</accession>
<accession>P23567</accession>
<accession>Q9D0J6</accession>
<comment type="function">
    <text evidence="1 4 5">E2 ubiquitin-conjugating enzyme that accepts ubiquitin from the ubiquitin-activating enzyme E1 and transfers it to a E3 ubiquitin-protein ligase (PubMed:1313008). In vitro catalyzes 'Lys-11'-, as well as 'Lys-48'- and 'Lys-63'-linked polyubiquitination (By similarity). Together with the E3 enzyme BRE1 (RNF20 and/or RNF40), plays a role in transcription regulation by catalyzing the monoubiquitination of histone H2B at 'Lys-120' to form H2BK120ub1 (By similarity). H2BK120ub1 gives a specific tag for epigenetic transcriptional activation, elongation by RNA polymerase II, telomeric silencing, and is also a prerequisite for H3K4me and H3K79me formation (By similarity). May play a role in DNA repair (By similarity). Associates to the E3 ligase RAD18 to form the UBE2B-RAD18 ubiquitin ligase complex involved in mono-ubiquitination of DNA-associated PCNA on 'Lys-164' (By similarity). In association with the E3 enzyme UBR4, is involved in N-end rule-dependent protein degradation (By similarity). May be involved in neurite outgrowth (PubMed:15946855).</text>
</comment>
<comment type="catalytic activity">
    <reaction evidence="1 2 3">
        <text>S-ubiquitinyl-[E1 ubiquitin-activating enzyme]-L-cysteine + [E2 ubiquitin-conjugating enzyme]-L-cysteine = [E1 ubiquitin-activating enzyme]-L-cysteine + S-ubiquitinyl-[E2 ubiquitin-conjugating enzyme]-L-cysteine.</text>
        <dbReference type="EC" id="2.3.2.23"/>
    </reaction>
</comment>
<comment type="pathway">
    <text evidence="1 2">Protein modification; protein ubiquitination.</text>
</comment>
<comment type="subunit">
    <text evidence="1">Interacts with RAD18, UBR2 and WAC.</text>
</comment>
<comment type="subcellular location">
    <subcellularLocation>
        <location evidence="5">Cell membrane</location>
    </subcellularLocation>
    <subcellularLocation>
        <location evidence="5">Nucleus</location>
    </subcellularLocation>
    <text>In peripheral neurons, expressed both at the plasma membrane and in nuclei.</text>
</comment>
<comment type="tissue specificity">
    <text evidence="6">Expressed at high levels in testes, moderate levels in muscle, heart, and brain, and low levels in liver and kidney. Upon fasting, increased levels were seen in muscle, heart, liver, and kidney.</text>
</comment>
<comment type="induction">
    <text evidence="5">Up-regulated by NGF.</text>
</comment>
<comment type="similarity">
    <text evidence="2">Belongs to the ubiquitin-conjugating enzyme family.</text>
</comment>
<gene>
    <name evidence="8" type="primary">Ube2b</name>
    <name type="synonym">Rad6b</name>
</gene>
<organism>
    <name type="scientific">Rattus norvegicus</name>
    <name type="common">Rat</name>
    <dbReference type="NCBI Taxonomy" id="10116"/>
    <lineage>
        <taxon>Eukaryota</taxon>
        <taxon>Metazoa</taxon>
        <taxon>Chordata</taxon>
        <taxon>Craniata</taxon>
        <taxon>Vertebrata</taxon>
        <taxon>Euteleostomi</taxon>
        <taxon>Mammalia</taxon>
        <taxon>Eutheria</taxon>
        <taxon>Euarchontoglires</taxon>
        <taxon>Glires</taxon>
        <taxon>Rodentia</taxon>
        <taxon>Myomorpha</taxon>
        <taxon>Muroidea</taxon>
        <taxon>Muridae</taxon>
        <taxon>Murinae</taxon>
        <taxon>Rattus</taxon>
    </lineage>
</organism>
<protein>
    <recommendedName>
        <fullName evidence="7">Ubiquitin-conjugating enzyme E2 B</fullName>
        <ecNumber evidence="1">2.3.2.23</ecNumber>
    </recommendedName>
    <alternativeName>
        <fullName>E2 ubiquitin-conjugating enzyme B</fullName>
    </alternativeName>
    <alternativeName>
        <fullName>RAD6 homolog B</fullName>
        <shortName>HR6B</shortName>
    </alternativeName>
    <alternativeName>
        <fullName>Ubiquitin carrier protein B</fullName>
    </alternativeName>
    <alternativeName>
        <fullName>Ubiquitin-conjugating enzyme E2(14k)</fullName>
    </alternativeName>
    <alternativeName>
        <fullName>Ubiquitin-protein ligase B</fullName>
    </alternativeName>
</protein>
<name>UBE2B_RAT</name>
<keyword id="KW-0067">ATP-binding</keyword>
<keyword id="KW-1003">Cell membrane</keyword>
<keyword id="KW-0227">DNA damage</keyword>
<keyword id="KW-0234">DNA repair</keyword>
<keyword id="KW-0472">Membrane</keyword>
<keyword id="KW-0547">Nucleotide-binding</keyword>
<keyword id="KW-0539">Nucleus</keyword>
<keyword id="KW-1185">Reference proteome</keyword>
<keyword id="KW-0808">Transferase</keyword>
<keyword id="KW-0833">Ubl conjugation pathway</keyword>
<feature type="chain" id="PRO_0000082450" description="Ubiquitin-conjugating enzyme E2 B">
    <location>
        <begin position="1"/>
        <end position="152"/>
    </location>
</feature>
<feature type="domain" description="UBC core" evidence="2">
    <location>
        <begin position="4"/>
        <end position="150"/>
    </location>
</feature>
<feature type="active site" description="Glycyl thioester intermediate" evidence="2 3">
    <location>
        <position position="88"/>
    </location>
</feature>
<sequence>MSTPARRRLMRDFKRLQEDPPVGVSGAPSENNIMQWNAVIFGPEGTPFEDGTFKLVIEFSEEYPNKPPTVRFLSKMFHPNVYADGSICLDILQNRWSPTYDVSSILTSIQSLLDEPNPNSPANSQAAQLYQENKREYEKRVSAIVEQSWNDS</sequence>
<dbReference type="EC" id="2.3.2.23" evidence="1"/>
<dbReference type="EMBL" id="M62388">
    <property type="protein sequence ID" value="AAA21087.1"/>
    <property type="molecule type" value="mRNA"/>
</dbReference>
<dbReference type="EMBL" id="U04308">
    <property type="protein sequence ID" value="AAB60669.1"/>
    <property type="molecule type" value="Genomic_DNA"/>
</dbReference>
<dbReference type="EMBL" id="U04303">
    <property type="protein sequence ID" value="AAB60669.1"/>
    <property type="status" value="JOINED"/>
    <property type="molecule type" value="Genomic_DNA"/>
</dbReference>
<dbReference type="EMBL" id="U04304">
    <property type="protein sequence ID" value="AAB60669.1"/>
    <property type="status" value="JOINED"/>
    <property type="molecule type" value="Genomic_DNA"/>
</dbReference>
<dbReference type="EMBL" id="U04305">
    <property type="protein sequence ID" value="AAB60669.1"/>
    <property type="status" value="JOINED"/>
    <property type="molecule type" value="Genomic_DNA"/>
</dbReference>
<dbReference type="EMBL" id="U04306">
    <property type="protein sequence ID" value="AAB60669.1"/>
    <property type="status" value="JOINED"/>
    <property type="molecule type" value="Genomic_DNA"/>
</dbReference>
<dbReference type="EMBL" id="U04307">
    <property type="protein sequence ID" value="AAB60669.1"/>
    <property type="status" value="JOINED"/>
    <property type="molecule type" value="Genomic_DNA"/>
</dbReference>
<dbReference type="EMBL" id="AF144083">
    <property type="protein sequence ID" value="AAD37966.1"/>
    <property type="molecule type" value="mRNA"/>
</dbReference>
<dbReference type="EMBL" id="BC070946">
    <property type="protein sequence ID" value="AAH70946.1"/>
    <property type="molecule type" value="mRNA"/>
</dbReference>
<dbReference type="PIR" id="I51913">
    <property type="entry name" value="I51913"/>
</dbReference>
<dbReference type="RefSeq" id="NP_112400.1">
    <property type="nucleotide sequence ID" value="NM_031138.2"/>
</dbReference>
<dbReference type="BMRB" id="P63149"/>
<dbReference type="SMR" id="P63149"/>
<dbReference type="BioGRID" id="249674">
    <property type="interactions" value="1"/>
</dbReference>
<dbReference type="FunCoup" id="P63149">
    <property type="interactions" value="2706"/>
</dbReference>
<dbReference type="STRING" id="10116.ENSRNOP00000016742"/>
<dbReference type="iPTMnet" id="P63149"/>
<dbReference type="PhosphoSitePlus" id="P63149"/>
<dbReference type="jPOST" id="P63149"/>
<dbReference type="PaxDb" id="10116-ENSRNOP00000016742"/>
<dbReference type="GeneID" id="81816"/>
<dbReference type="KEGG" id="rno:81816"/>
<dbReference type="UCSC" id="RGD:708345">
    <property type="organism name" value="rat"/>
</dbReference>
<dbReference type="AGR" id="RGD:708345"/>
<dbReference type="CTD" id="7320"/>
<dbReference type="RGD" id="708345">
    <property type="gene designation" value="Ube2b"/>
</dbReference>
<dbReference type="eggNOG" id="KOG0419">
    <property type="taxonomic scope" value="Eukaryota"/>
</dbReference>
<dbReference type="HOGENOM" id="CLU_030988_10_2_1"/>
<dbReference type="InParanoid" id="P63149"/>
<dbReference type="OrthoDB" id="9984419at2759"/>
<dbReference type="PhylomeDB" id="P63149"/>
<dbReference type="TreeFam" id="TF101128"/>
<dbReference type="Reactome" id="R-RNO-110314">
    <property type="pathway name" value="Recognition of DNA damage by PCNA-containing replication complex"/>
</dbReference>
<dbReference type="Reactome" id="R-RNO-8866652">
    <property type="pathway name" value="Synthesis of active ubiquitin: roles of E1 and E2 enzymes"/>
</dbReference>
<dbReference type="Reactome" id="R-RNO-8866654">
    <property type="pathway name" value="E3 ubiquitin ligases ubiquitinate target proteins"/>
</dbReference>
<dbReference type="Reactome" id="R-RNO-983168">
    <property type="pathway name" value="Antigen processing: Ubiquitination &amp; Proteasome degradation"/>
</dbReference>
<dbReference type="UniPathway" id="UPA00143"/>
<dbReference type="PRO" id="PR:P63149"/>
<dbReference type="Proteomes" id="UP000002494">
    <property type="component" value="Unplaced"/>
</dbReference>
<dbReference type="GO" id="GO:0000785">
    <property type="term" value="C:chromatin"/>
    <property type="evidence" value="ECO:0000266"/>
    <property type="project" value="RGD"/>
</dbReference>
<dbReference type="GO" id="GO:0005737">
    <property type="term" value="C:cytoplasm"/>
    <property type="evidence" value="ECO:0000266"/>
    <property type="project" value="RGD"/>
</dbReference>
<dbReference type="GO" id="GO:0033503">
    <property type="term" value="C:HULC complex"/>
    <property type="evidence" value="ECO:0000250"/>
    <property type="project" value="UniProtKB"/>
</dbReference>
<dbReference type="GO" id="GO:0005634">
    <property type="term" value="C:nucleus"/>
    <property type="evidence" value="ECO:0000266"/>
    <property type="project" value="RGD"/>
</dbReference>
<dbReference type="GO" id="GO:0005886">
    <property type="term" value="C:plasma membrane"/>
    <property type="evidence" value="ECO:0007669"/>
    <property type="project" value="UniProtKB-SubCell"/>
</dbReference>
<dbReference type="GO" id="GO:0005657">
    <property type="term" value="C:replication fork"/>
    <property type="evidence" value="ECO:0000266"/>
    <property type="project" value="RGD"/>
</dbReference>
<dbReference type="GO" id="GO:0001741">
    <property type="term" value="C:XY body"/>
    <property type="evidence" value="ECO:0000266"/>
    <property type="project" value="RGD"/>
</dbReference>
<dbReference type="GO" id="GO:0005524">
    <property type="term" value="F:ATP binding"/>
    <property type="evidence" value="ECO:0007669"/>
    <property type="project" value="UniProtKB-KW"/>
</dbReference>
<dbReference type="GO" id="GO:0061631">
    <property type="term" value="F:ubiquitin conjugating enzyme activity"/>
    <property type="evidence" value="ECO:0000266"/>
    <property type="project" value="RGD"/>
</dbReference>
<dbReference type="GO" id="GO:0031625">
    <property type="term" value="F:ubiquitin protein ligase binding"/>
    <property type="evidence" value="ECO:0000266"/>
    <property type="project" value="RGD"/>
</dbReference>
<dbReference type="GO" id="GO:0004842">
    <property type="term" value="F:ubiquitin-protein transferase activity"/>
    <property type="evidence" value="ECO:0000250"/>
    <property type="project" value="UniProtKB"/>
</dbReference>
<dbReference type="GO" id="GO:0006915">
    <property type="term" value="P:apoptotic process"/>
    <property type="evidence" value="ECO:0000266"/>
    <property type="project" value="RGD"/>
</dbReference>
<dbReference type="GO" id="GO:0032869">
    <property type="term" value="P:cellular response to insulin stimulus"/>
    <property type="evidence" value="ECO:0000270"/>
    <property type="project" value="RGD"/>
</dbReference>
<dbReference type="GO" id="GO:0051026">
    <property type="term" value="P:chiasma assembly"/>
    <property type="evidence" value="ECO:0000266"/>
    <property type="project" value="RGD"/>
</dbReference>
<dbReference type="GO" id="GO:0006325">
    <property type="term" value="P:chromatin organization"/>
    <property type="evidence" value="ECO:0000266"/>
    <property type="project" value="RGD"/>
</dbReference>
<dbReference type="GO" id="GO:0006974">
    <property type="term" value="P:DNA damage response"/>
    <property type="evidence" value="ECO:0000266"/>
    <property type="project" value="RGD"/>
</dbReference>
<dbReference type="GO" id="GO:0006281">
    <property type="term" value="P:DNA repair"/>
    <property type="evidence" value="ECO:0000266"/>
    <property type="project" value="RGD"/>
</dbReference>
<dbReference type="GO" id="GO:0035234">
    <property type="term" value="P:ectopic germ cell programmed cell death"/>
    <property type="evidence" value="ECO:0000266"/>
    <property type="project" value="RGD"/>
</dbReference>
<dbReference type="GO" id="GO:0001701">
    <property type="term" value="P:in utero embryonic development"/>
    <property type="evidence" value="ECO:0000266"/>
    <property type="project" value="RGD"/>
</dbReference>
<dbReference type="GO" id="GO:0045141">
    <property type="term" value="P:meiotic telomere clustering"/>
    <property type="evidence" value="ECO:0000266"/>
    <property type="project" value="RGD"/>
</dbReference>
<dbReference type="GO" id="GO:0043066">
    <property type="term" value="P:negative regulation of apoptotic process"/>
    <property type="evidence" value="ECO:0000266"/>
    <property type="project" value="RGD"/>
</dbReference>
<dbReference type="GO" id="GO:0051093">
    <property type="term" value="P:negative regulation of developmental process"/>
    <property type="evidence" value="ECO:0000266"/>
    <property type="project" value="RGD"/>
</dbReference>
<dbReference type="GO" id="GO:1901874">
    <property type="term" value="P:negative regulation of post-translational protein modification"/>
    <property type="evidence" value="ECO:0000266"/>
    <property type="project" value="RGD"/>
</dbReference>
<dbReference type="GO" id="GO:2000242">
    <property type="term" value="P:negative regulation of reproductive process"/>
    <property type="evidence" value="ECO:0000266"/>
    <property type="project" value="RGD"/>
</dbReference>
<dbReference type="GO" id="GO:0090263">
    <property type="term" value="P:positive regulation of canonical Wnt signaling pathway"/>
    <property type="evidence" value="ECO:0000266"/>
    <property type="project" value="RGD"/>
</dbReference>
<dbReference type="GO" id="GO:0010845">
    <property type="term" value="P:positive regulation of reciprocal meiotic recombination"/>
    <property type="evidence" value="ECO:0000266"/>
    <property type="project" value="RGD"/>
</dbReference>
<dbReference type="GO" id="GO:0006301">
    <property type="term" value="P:postreplication repair"/>
    <property type="evidence" value="ECO:0000266"/>
    <property type="project" value="RGD"/>
</dbReference>
<dbReference type="GO" id="GO:0043161">
    <property type="term" value="P:proteasome-mediated ubiquitin-dependent protein catabolic process"/>
    <property type="evidence" value="ECO:0000266"/>
    <property type="project" value="RGD"/>
</dbReference>
<dbReference type="GO" id="GO:0051865">
    <property type="term" value="P:protein autoubiquitination"/>
    <property type="evidence" value="ECO:0000266"/>
    <property type="project" value="RGD"/>
</dbReference>
<dbReference type="GO" id="GO:0070979">
    <property type="term" value="P:protein K11-linked ubiquitination"/>
    <property type="evidence" value="ECO:0000250"/>
    <property type="project" value="UniProtKB"/>
</dbReference>
<dbReference type="GO" id="GO:0070936">
    <property type="term" value="P:protein K48-linked ubiquitination"/>
    <property type="evidence" value="ECO:0000250"/>
    <property type="project" value="UniProtKB"/>
</dbReference>
<dbReference type="GO" id="GO:0070534">
    <property type="term" value="P:protein K63-linked ubiquitination"/>
    <property type="evidence" value="ECO:0000250"/>
    <property type="project" value="UniProtKB"/>
</dbReference>
<dbReference type="GO" id="GO:0000209">
    <property type="term" value="P:protein polyubiquitination"/>
    <property type="evidence" value="ECO:0000318"/>
    <property type="project" value="GO_Central"/>
</dbReference>
<dbReference type="GO" id="GO:0050821">
    <property type="term" value="P:protein stabilization"/>
    <property type="evidence" value="ECO:0000266"/>
    <property type="project" value="RGD"/>
</dbReference>
<dbReference type="GO" id="GO:0016567">
    <property type="term" value="P:protein ubiquitination"/>
    <property type="evidence" value="ECO:0000266"/>
    <property type="project" value="RGD"/>
</dbReference>
<dbReference type="GO" id="GO:0001666">
    <property type="term" value="P:response to hypoxia"/>
    <property type="evidence" value="ECO:0000270"/>
    <property type="project" value="RGD"/>
</dbReference>
<dbReference type="GO" id="GO:0009411">
    <property type="term" value="P:response to UV"/>
    <property type="evidence" value="ECO:0000266"/>
    <property type="project" value="RGD"/>
</dbReference>
<dbReference type="GO" id="GO:0009410">
    <property type="term" value="P:response to xenobiotic stimulus"/>
    <property type="evidence" value="ECO:0000266"/>
    <property type="project" value="RGD"/>
</dbReference>
<dbReference type="GO" id="GO:0007288">
    <property type="term" value="P:sperm axoneme assembly"/>
    <property type="evidence" value="ECO:0000266"/>
    <property type="project" value="RGD"/>
</dbReference>
<dbReference type="GO" id="GO:0070193">
    <property type="term" value="P:synaptonemal complex organization"/>
    <property type="evidence" value="ECO:0000266"/>
    <property type="project" value="RGD"/>
</dbReference>
<dbReference type="GO" id="GO:0006511">
    <property type="term" value="P:ubiquitin-dependent protein catabolic process"/>
    <property type="evidence" value="ECO:0000270"/>
    <property type="project" value="RGD"/>
</dbReference>
<dbReference type="CDD" id="cd23790">
    <property type="entry name" value="UBCc_UBE2A_2B"/>
    <property type="match status" value="1"/>
</dbReference>
<dbReference type="FunFam" id="3.10.110.10:FF:000062">
    <property type="entry name" value="Ubiquitin-conjugating enzyme E2 B"/>
    <property type="match status" value="1"/>
</dbReference>
<dbReference type="Gene3D" id="3.10.110.10">
    <property type="entry name" value="Ubiquitin Conjugating Enzyme"/>
    <property type="match status" value="1"/>
</dbReference>
<dbReference type="InterPro" id="IPR050113">
    <property type="entry name" value="Ub_conjugating_enzyme"/>
</dbReference>
<dbReference type="InterPro" id="IPR000608">
    <property type="entry name" value="UBQ-conjugat_E2_core"/>
</dbReference>
<dbReference type="InterPro" id="IPR023313">
    <property type="entry name" value="UBQ-conjugating_AS"/>
</dbReference>
<dbReference type="InterPro" id="IPR016135">
    <property type="entry name" value="UBQ-conjugating_enzyme/RWD"/>
</dbReference>
<dbReference type="PANTHER" id="PTHR24067">
    <property type="entry name" value="UBIQUITIN-CONJUGATING ENZYME E2"/>
    <property type="match status" value="1"/>
</dbReference>
<dbReference type="Pfam" id="PF00179">
    <property type="entry name" value="UQ_con"/>
    <property type="match status" value="1"/>
</dbReference>
<dbReference type="SMART" id="SM00212">
    <property type="entry name" value="UBCc"/>
    <property type="match status" value="1"/>
</dbReference>
<dbReference type="SUPFAM" id="SSF54495">
    <property type="entry name" value="UBC-like"/>
    <property type="match status" value="1"/>
</dbReference>
<dbReference type="PROSITE" id="PS00183">
    <property type="entry name" value="UBC_1"/>
    <property type="match status" value="1"/>
</dbReference>
<dbReference type="PROSITE" id="PS50127">
    <property type="entry name" value="UBC_2"/>
    <property type="match status" value="1"/>
</dbReference>